<keyword id="KW-0012">Acyltransferase</keyword>
<keyword id="KW-0133">Cell shape</keyword>
<keyword id="KW-0961">Cell wall biogenesis/degradation</keyword>
<keyword id="KW-0963">Cytoplasm</keyword>
<keyword id="KW-0460">Magnesium</keyword>
<keyword id="KW-0479">Metal-binding</keyword>
<keyword id="KW-0511">Multifunctional enzyme</keyword>
<keyword id="KW-0548">Nucleotidyltransferase</keyword>
<keyword id="KW-0573">Peptidoglycan synthesis</keyword>
<keyword id="KW-0677">Repeat</keyword>
<keyword id="KW-0808">Transferase</keyword>
<dbReference type="EC" id="2.7.7.23" evidence="1"/>
<dbReference type="EC" id="2.3.1.157" evidence="1"/>
<dbReference type="EMBL" id="CP000726">
    <property type="protein sequence ID" value="ABS33040.1"/>
    <property type="molecule type" value="Genomic_DNA"/>
</dbReference>
<dbReference type="RefSeq" id="WP_012048387.1">
    <property type="nucleotide sequence ID" value="NC_009697.1"/>
</dbReference>
<dbReference type="SMR" id="A7FPK2"/>
<dbReference type="GeneID" id="5185390"/>
<dbReference type="KEGG" id="cba:CLB_3626"/>
<dbReference type="HOGENOM" id="CLU_029499_15_2_9"/>
<dbReference type="UniPathway" id="UPA00113">
    <property type="reaction ID" value="UER00532"/>
</dbReference>
<dbReference type="UniPathway" id="UPA00113">
    <property type="reaction ID" value="UER00533"/>
</dbReference>
<dbReference type="UniPathway" id="UPA00973"/>
<dbReference type="GO" id="GO:0005737">
    <property type="term" value="C:cytoplasm"/>
    <property type="evidence" value="ECO:0007669"/>
    <property type="project" value="UniProtKB-SubCell"/>
</dbReference>
<dbReference type="GO" id="GO:0016020">
    <property type="term" value="C:membrane"/>
    <property type="evidence" value="ECO:0007669"/>
    <property type="project" value="GOC"/>
</dbReference>
<dbReference type="GO" id="GO:0019134">
    <property type="term" value="F:glucosamine-1-phosphate N-acetyltransferase activity"/>
    <property type="evidence" value="ECO:0007669"/>
    <property type="project" value="UniProtKB-UniRule"/>
</dbReference>
<dbReference type="GO" id="GO:0000287">
    <property type="term" value="F:magnesium ion binding"/>
    <property type="evidence" value="ECO:0007669"/>
    <property type="project" value="UniProtKB-UniRule"/>
</dbReference>
<dbReference type="GO" id="GO:0003977">
    <property type="term" value="F:UDP-N-acetylglucosamine diphosphorylase activity"/>
    <property type="evidence" value="ECO:0007669"/>
    <property type="project" value="UniProtKB-UniRule"/>
</dbReference>
<dbReference type="GO" id="GO:0000902">
    <property type="term" value="P:cell morphogenesis"/>
    <property type="evidence" value="ECO:0007669"/>
    <property type="project" value="UniProtKB-UniRule"/>
</dbReference>
<dbReference type="GO" id="GO:0071555">
    <property type="term" value="P:cell wall organization"/>
    <property type="evidence" value="ECO:0007669"/>
    <property type="project" value="UniProtKB-KW"/>
</dbReference>
<dbReference type="GO" id="GO:0009245">
    <property type="term" value="P:lipid A biosynthetic process"/>
    <property type="evidence" value="ECO:0007669"/>
    <property type="project" value="UniProtKB-UniRule"/>
</dbReference>
<dbReference type="GO" id="GO:0009252">
    <property type="term" value="P:peptidoglycan biosynthetic process"/>
    <property type="evidence" value="ECO:0007669"/>
    <property type="project" value="UniProtKB-UniRule"/>
</dbReference>
<dbReference type="GO" id="GO:0008360">
    <property type="term" value="P:regulation of cell shape"/>
    <property type="evidence" value="ECO:0007669"/>
    <property type="project" value="UniProtKB-KW"/>
</dbReference>
<dbReference type="GO" id="GO:0006048">
    <property type="term" value="P:UDP-N-acetylglucosamine biosynthetic process"/>
    <property type="evidence" value="ECO:0007669"/>
    <property type="project" value="UniProtKB-UniPathway"/>
</dbReference>
<dbReference type="CDD" id="cd02540">
    <property type="entry name" value="GT2_GlmU_N_bac"/>
    <property type="match status" value="1"/>
</dbReference>
<dbReference type="CDD" id="cd03353">
    <property type="entry name" value="LbH_GlmU_C"/>
    <property type="match status" value="1"/>
</dbReference>
<dbReference type="Gene3D" id="2.160.10.10">
    <property type="entry name" value="Hexapeptide repeat proteins"/>
    <property type="match status" value="1"/>
</dbReference>
<dbReference type="Gene3D" id="3.90.550.10">
    <property type="entry name" value="Spore Coat Polysaccharide Biosynthesis Protein SpsA, Chain A"/>
    <property type="match status" value="1"/>
</dbReference>
<dbReference type="HAMAP" id="MF_01631">
    <property type="entry name" value="GlmU"/>
    <property type="match status" value="1"/>
</dbReference>
<dbReference type="InterPro" id="IPR005882">
    <property type="entry name" value="Bifunctional_GlmU"/>
</dbReference>
<dbReference type="InterPro" id="IPR050065">
    <property type="entry name" value="GlmU-like"/>
</dbReference>
<dbReference type="InterPro" id="IPR038009">
    <property type="entry name" value="GlmU_C_LbH"/>
</dbReference>
<dbReference type="InterPro" id="IPR001451">
    <property type="entry name" value="Hexapep"/>
</dbReference>
<dbReference type="InterPro" id="IPR005835">
    <property type="entry name" value="NTP_transferase_dom"/>
</dbReference>
<dbReference type="InterPro" id="IPR029044">
    <property type="entry name" value="Nucleotide-diphossugar_trans"/>
</dbReference>
<dbReference type="InterPro" id="IPR011004">
    <property type="entry name" value="Trimer_LpxA-like_sf"/>
</dbReference>
<dbReference type="NCBIfam" id="TIGR01173">
    <property type="entry name" value="glmU"/>
    <property type="match status" value="1"/>
</dbReference>
<dbReference type="NCBIfam" id="NF010934">
    <property type="entry name" value="PRK14354.1"/>
    <property type="match status" value="1"/>
</dbReference>
<dbReference type="PANTHER" id="PTHR43584:SF3">
    <property type="entry name" value="BIFUNCTIONAL PROTEIN GLMU"/>
    <property type="match status" value="1"/>
</dbReference>
<dbReference type="PANTHER" id="PTHR43584">
    <property type="entry name" value="NUCLEOTIDYL TRANSFERASE"/>
    <property type="match status" value="1"/>
</dbReference>
<dbReference type="Pfam" id="PF00132">
    <property type="entry name" value="Hexapep"/>
    <property type="match status" value="3"/>
</dbReference>
<dbReference type="Pfam" id="PF00483">
    <property type="entry name" value="NTP_transferase"/>
    <property type="match status" value="1"/>
</dbReference>
<dbReference type="SUPFAM" id="SSF53448">
    <property type="entry name" value="Nucleotide-diphospho-sugar transferases"/>
    <property type="match status" value="1"/>
</dbReference>
<dbReference type="SUPFAM" id="SSF51161">
    <property type="entry name" value="Trimeric LpxA-like enzymes"/>
    <property type="match status" value="1"/>
</dbReference>
<proteinExistence type="inferred from homology"/>
<feature type="chain" id="PRO_1000056150" description="Bifunctional protein GlmU">
    <location>
        <begin position="1"/>
        <end position="457"/>
    </location>
</feature>
<feature type="region of interest" description="Pyrophosphorylase" evidence="1">
    <location>
        <begin position="1"/>
        <end position="229"/>
    </location>
</feature>
<feature type="region of interest" description="Linker" evidence="1">
    <location>
        <begin position="230"/>
        <end position="250"/>
    </location>
</feature>
<feature type="region of interest" description="N-acetyltransferase" evidence="1">
    <location>
        <begin position="251"/>
        <end position="457"/>
    </location>
</feature>
<feature type="active site" description="Proton acceptor" evidence="1">
    <location>
        <position position="362"/>
    </location>
</feature>
<feature type="binding site" evidence="1">
    <location>
        <begin position="8"/>
        <end position="11"/>
    </location>
    <ligand>
        <name>UDP-N-acetyl-alpha-D-glucosamine</name>
        <dbReference type="ChEBI" id="CHEBI:57705"/>
    </ligand>
</feature>
<feature type="binding site" evidence="1">
    <location>
        <position position="22"/>
    </location>
    <ligand>
        <name>UDP-N-acetyl-alpha-D-glucosamine</name>
        <dbReference type="ChEBI" id="CHEBI:57705"/>
    </ligand>
</feature>
<feature type="binding site" evidence="1">
    <location>
        <position position="73"/>
    </location>
    <ligand>
        <name>UDP-N-acetyl-alpha-D-glucosamine</name>
        <dbReference type="ChEBI" id="CHEBI:57705"/>
    </ligand>
</feature>
<feature type="binding site" evidence="1">
    <location>
        <begin position="78"/>
        <end position="79"/>
    </location>
    <ligand>
        <name>UDP-N-acetyl-alpha-D-glucosamine</name>
        <dbReference type="ChEBI" id="CHEBI:57705"/>
    </ligand>
</feature>
<feature type="binding site" evidence="1">
    <location>
        <position position="103"/>
    </location>
    <ligand>
        <name>Mg(2+)</name>
        <dbReference type="ChEBI" id="CHEBI:18420"/>
    </ligand>
</feature>
<feature type="binding site" evidence="1">
    <location>
        <position position="140"/>
    </location>
    <ligand>
        <name>UDP-N-acetyl-alpha-D-glucosamine</name>
        <dbReference type="ChEBI" id="CHEBI:57705"/>
    </ligand>
</feature>
<feature type="binding site" evidence="1">
    <location>
        <position position="155"/>
    </location>
    <ligand>
        <name>UDP-N-acetyl-alpha-D-glucosamine</name>
        <dbReference type="ChEBI" id="CHEBI:57705"/>
    </ligand>
</feature>
<feature type="binding site" evidence="1">
    <location>
        <position position="170"/>
    </location>
    <ligand>
        <name>UDP-N-acetyl-alpha-D-glucosamine</name>
        <dbReference type="ChEBI" id="CHEBI:57705"/>
    </ligand>
</feature>
<feature type="binding site" evidence="1">
    <location>
        <position position="227"/>
    </location>
    <ligand>
        <name>Mg(2+)</name>
        <dbReference type="ChEBI" id="CHEBI:18420"/>
    </ligand>
</feature>
<feature type="binding site" evidence="1">
    <location>
        <position position="227"/>
    </location>
    <ligand>
        <name>UDP-N-acetyl-alpha-D-glucosamine</name>
        <dbReference type="ChEBI" id="CHEBI:57705"/>
    </ligand>
</feature>
<feature type="binding site" evidence="1">
    <location>
        <position position="332"/>
    </location>
    <ligand>
        <name>UDP-N-acetyl-alpha-D-glucosamine</name>
        <dbReference type="ChEBI" id="CHEBI:57705"/>
    </ligand>
</feature>
<feature type="binding site" evidence="1">
    <location>
        <position position="350"/>
    </location>
    <ligand>
        <name>UDP-N-acetyl-alpha-D-glucosamine</name>
        <dbReference type="ChEBI" id="CHEBI:57705"/>
    </ligand>
</feature>
<feature type="binding site" evidence="1">
    <location>
        <position position="365"/>
    </location>
    <ligand>
        <name>UDP-N-acetyl-alpha-D-glucosamine</name>
        <dbReference type="ChEBI" id="CHEBI:57705"/>
    </ligand>
</feature>
<feature type="binding site" evidence="1">
    <location>
        <position position="376"/>
    </location>
    <ligand>
        <name>UDP-N-acetyl-alpha-D-glucosamine</name>
        <dbReference type="ChEBI" id="CHEBI:57705"/>
    </ligand>
</feature>
<feature type="binding site" evidence="1">
    <location>
        <begin position="385"/>
        <end position="386"/>
    </location>
    <ligand>
        <name>acetyl-CoA</name>
        <dbReference type="ChEBI" id="CHEBI:57288"/>
    </ligand>
</feature>
<feature type="binding site" evidence="1">
    <location>
        <position position="422"/>
    </location>
    <ligand>
        <name>acetyl-CoA</name>
        <dbReference type="ChEBI" id="CHEBI:57288"/>
    </ligand>
</feature>
<feature type="binding site" evidence="1">
    <location>
        <position position="439"/>
    </location>
    <ligand>
        <name>acetyl-CoA</name>
        <dbReference type="ChEBI" id="CHEBI:57288"/>
    </ligand>
</feature>
<organism>
    <name type="scientific">Clostridium botulinum (strain ATCC 19397 / Type A)</name>
    <dbReference type="NCBI Taxonomy" id="441770"/>
    <lineage>
        <taxon>Bacteria</taxon>
        <taxon>Bacillati</taxon>
        <taxon>Bacillota</taxon>
        <taxon>Clostridia</taxon>
        <taxon>Eubacteriales</taxon>
        <taxon>Clostridiaceae</taxon>
        <taxon>Clostridium</taxon>
    </lineage>
</organism>
<sequence length="457" mass="50130">MYNCAIILAAGKGKRMKSSMPKVVHKVCGKEMVNHVIDNVRKANIKDVNLVIGKGSETVKEHTKDRNVTYSMQEEQLGTGHAVICAEEFLKDKKGTVAIFTGDAPLITNETIQQLFEFHNSGKYAATLISSTVQDPTGYGRIIREASGEVKKIVEHKDCNEEELKVNEINSGMYCFDIEVLLNSLKNLNNDNSQGEYYLTDVIEITKKSGDKVGAIVVPYEEIMGVNSRVQLSEAEIVMRKRINHKHMVNGVTFIDCESTYIDVDVEIGNDTIIYPGCVIQGNTRIKEECTLYSNSRICNSVIGSGVIVENSVILESHVGEGTTVGPFAYIRPETKIGKSARIGDFVEIKKSTIGDNTKVSHLTYIGDAEVGSKCNFGCGTVVVNYDGQKKQKTIIGNNAFIGCNTNLISPVKVNDNTYIAAGSTITKEVPEGSLAIARSKQINKEGWLDKKGLLKK</sequence>
<accession>A7FPK2</accession>
<name>GLMU_CLOB1</name>
<comment type="function">
    <text evidence="1">Catalyzes the last two sequential reactions in the de novo biosynthetic pathway for UDP-N-acetylglucosamine (UDP-GlcNAc). The C-terminal domain catalyzes the transfer of acetyl group from acetyl coenzyme A to glucosamine-1-phosphate (GlcN-1-P) to produce N-acetylglucosamine-1-phosphate (GlcNAc-1-P), which is converted into UDP-GlcNAc by the transfer of uridine 5-monophosphate (from uridine 5-triphosphate), a reaction catalyzed by the N-terminal domain.</text>
</comment>
<comment type="catalytic activity">
    <reaction evidence="1">
        <text>alpha-D-glucosamine 1-phosphate + acetyl-CoA = N-acetyl-alpha-D-glucosamine 1-phosphate + CoA + H(+)</text>
        <dbReference type="Rhea" id="RHEA:13725"/>
        <dbReference type="ChEBI" id="CHEBI:15378"/>
        <dbReference type="ChEBI" id="CHEBI:57287"/>
        <dbReference type="ChEBI" id="CHEBI:57288"/>
        <dbReference type="ChEBI" id="CHEBI:57776"/>
        <dbReference type="ChEBI" id="CHEBI:58516"/>
        <dbReference type="EC" id="2.3.1.157"/>
    </reaction>
</comment>
<comment type="catalytic activity">
    <reaction evidence="1">
        <text>N-acetyl-alpha-D-glucosamine 1-phosphate + UTP + H(+) = UDP-N-acetyl-alpha-D-glucosamine + diphosphate</text>
        <dbReference type="Rhea" id="RHEA:13509"/>
        <dbReference type="ChEBI" id="CHEBI:15378"/>
        <dbReference type="ChEBI" id="CHEBI:33019"/>
        <dbReference type="ChEBI" id="CHEBI:46398"/>
        <dbReference type="ChEBI" id="CHEBI:57705"/>
        <dbReference type="ChEBI" id="CHEBI:57776"/>
        <dbReference type="EC" id="2.7.7.23"/>
    </reaction>
</comment>
<comment type="cofactor">
    <cofactor evidence="1">
        <name>Mg(2+)</name>
        <dbReference type="ChEBI" id="CHEBI:18420"/>
    </cofactor>
    <text evidence="1">Binds 1 Mg(2+) ion per subunit.</text>
</comment>
<comment type="pathway">
    <text evidence="1">Nucleotide-sugar biosynthesis; UDP-N-acetyl-alpha-D-glucosamine biosynthesis; N-acetyl-alpha-D-glucosamine 1-phosphate from alpha-D-glucosamine 6-phosphate (route II): step 2/2.</text>
</comment>
<comment type="pathway">
    <text evidence="1">Nucleotide-sugar biosynthesis; UDP-N-acetyl-alpha-D-glucosamine biosynthesis; UDP-N-acetyl-alpha-D-glucosamine from N-acetyl-alpha-D-glucosamine 1-phosphate: step 1/1.</text>
</comment>
<comment type="pathway">
    <text evidence="1">Bacterial outer membrane biogenesis; LPS lipid A biosynthesis.</text>
</comment>
<comment type="subunit">
    <text evidence="1">Homotrimer.</text>
</comment>
<comment type="subcellular location">
    <subcellularLocation>
        <location evidence="1">Cytoplasm</location>
    </subcellularLocation>
</comment>
<comment type="similarity">
    <text evidence="1">In the N-terminal section; belongs to the N-acetylglucosamine-1-phosphate uridyltransferase family.</text>
</comment>
<comment type="similarity">
    <text evidence="1">In the C-terminal section; belongs to the transferase hexapeptide repeat family.</text>
</comment>
<evidence type="ECO:0000255" key="1">
    <source>
        <dbReference type="HAMAP-Rule" id="MF_01631"/>
    </source>
</evidence>
<reference key="1">
    <citation type="journal article" date="2007" name="PLoS ONE">
        <title>Analysis of the neurotoxin complex genes in Clostridium botulinum A1-A4 and B1 strains: BoNT/A3, /Ba4 and /B1 clusters are located within plasmids.</title>
        <authorList>
            <person name="Smith T.J."/>
            <person name="Hill K.K."/>
            <person name="Foley B.T."/>
            <person name="Detter J.C."/>
            <person name="Munk A.C."/>
            <person name="Bruce D.C."/>
            <person name="Doggett N.A."/>
            <person name="Smith L.A."/>
            <person name="Marks J.D."/>
            <person name="Xie G."/>
            <person name="Brettin T.S."/>
        </authorList>
    </citation>
    <scope>NUCLEOTIDE SEQUENCE [LARGE SCALE GENOMIC DNA]</scope>
    <source>
        <strain>ATCC 19397 / Type A</strain>
    </source>
</reference>
<protein>
    <recommendedName>
        <fullName evidence="1">Bifunctional protein GlmU</fullName>
    </recommendedName>
    <domain>
        <recommendedName>
            <fullName evidence="1">UDP-N-acetylglucosamine pyrophosphorylase</fullName>
            <ecNumber evidence="1">2.7.7.23</ecNumber>
        </recommendedName>
        <alternativeName>
            <fullName evidence="1">N-acetylglucosamine-1-phosphate uridyltransferase</fullName>
        </alternativeName>
    </domain>
    <domain>
        <recommendedName>
            <fullName evidence="1">Glucosamine-1-phosphate N-acetyltransferase</fullName>
            <ecNumber evidence="1">2.3.1.157</ecNumber>
        </recommendedName>
    </domain>
</protein>
<gene>
    <name evidence="1" type="primary">glmU</name>
    <name type="ordered locus">CLB_3626</name>
</gene>